<evidence type="ECO:0000250" key="1">
    <source>
        <dbReference type="UniProtKB" id="O15162"/>
    </source>
</evidence>
<evidence type="ECO:0000255" key="2">
    <source>
        <dbReference type="RuleBase" id="RU363116"/>
    </source>
</evidence>
<evidence type="ECO:0000269" key="3">
    <source>
    </source>
</evidence>
<evidence type="ECO:0000269" key="4">
    <source>
    </source>
</evidence>
<evidence type="ECO:0000303" key="5">
    <source>
    </source>
</evidence>
<evidence type="ECO:0000305" key="6"/>
<evidence type="ECO:0000305" key="7">
    <source>
    </source>
</evidence>
<evidence type="ECO:0000312" key="8">
    <source>
        <dbReference type="EMBL" id="CZT98482.1"/>
    </source>
</evidence>
<evidence type="ECO:0000312" key="9">
    <source>
        <dbReference type="Proteomes" id="UP000001450"/>
    </source>
</evidence>
<accession>Q8IJH8</accession>
<gene>
    <name evidence="5" type="primary">PLSCR</name>
    <name evidence="8" type="ORF">PF3D7_1022700</name>
</gene>
<proteinExistence type="evidence at protein level"/>
<comment type="function">
    <text evidence="3 4">Catalyzes calcium-induced ATP-independent rapid bidirectional and non-specific movement of phospholipids (lipid scrambling or lipid flip-flop) between the inner and outer leaflet of the plasma membrane resulting in collapse of the phospholipid asymmetry (PubMed:33974939). Preferentially, mediates calcium-dependent phosphatidylethanolamine externalization (PubMed:33974939). During the liver stage, plays a role in the interaction with, and thus invasion of, host hepatocytes (PubMed:34799567). Dispensable for host erythrocyte invasion and asexual parasite development (PubMed:33974939).</text>
</comment>
<comment type="catalytic activity">
    <reaction evidence="3">
        <text>a 1,2-diacyl-sn-glycero-3-phosphoethanolamine(in) = a 1,2-diacyl-sn-glycero-3-phosphoethanolamine(out)</text>
        <dbReference type="Rhea" id="RHEA:38895"/>
        <dbReference type="ChEBI" id="CHEBI:64612"/>
    </reaction>
    <physiologicalReaction direction="left-to-right" evidence="7">
        <dbReference type="Rhea" id="RHEA:38896"/>
    </physiologicalReaction>
</comment>
<comment type="cofactor">
    <cofactor evidence="3">
        <name>Ca(2+)</name>
        <dbReference type="ChEBI" id="CHEBI:29108"/>
    </cofactor>
</comment>
<comment type="cofactor">
    <cofactor evidence="3">
        <name>Mg(2+)</name>
        <dbReference type="ChEBI" id="CHEBI:18420"/>
    </cofactor>
</comment>
<comment type="subunit">
    <text evidence="3">Forms homooligomers in the presence of calcium.</text>
</comment>
<comment type="subcellular location">
    <subcellularLocation>
        <location evidence="3">Membrane</location>
    </subcellularLocation>
    <subcellularLocation>
        <location evidence="4">Cell membrane</location>
    </subcellularLocation>
    <text evidence="3 4">Localizes to the perinuclear region in the early ring stages and re-localizes to the cytoplasm and vesicular foci in early trophozoite and schizont stages (PubMed:33974939). Localizes to the cell membrane in individual merozoites in late schizonts (PubMed:33974939). In stage III-IV gametocytes, localizes to vesicular foci and to cell periphery (PubMed:33974939). In sporozoites, localizes to the cell membrane (PubMed:34799567).</text>
</comment>
<comment type="developmental stage">
    <text evidence="3 4">Expressed in sporozoites (at protein level) (PubMed:34799567). Expressed during the asexual blood stage, including in rings, trophozoites and schizonts (PubMed:33974939). Expressed in gametocytes (PubMed:33974939).</text>
</comment>
<comment type="disruption phenotype">
    <text evidence="3">No defect in asexual blood stage growth.</text>
</comment>
<comment type="similarity">
    <text evidence="2">Belongs to the phospholipid scramblase family.</text>
</comment>
<protein>
    <recommendedName>
        <fullName evidence="2">Phospholipid scramblase</fullName>
        <shortName evidence="5">PfPLSCR</shortName>
    </recommendedName>
</protein>
<feature type="chain" id="PRO_0000458016" description="Phospholipid scramblase">
    <location>
        <begin position="1"/>
        <end position="275"/>
    </location>
</feature>
<feature type="transmembrane region" description="Helical" evidence="1">
    <location>
        <begin position="256"/>
        <end position="272"/>
    </location>
</feature>
<reference evidence="9" key="1">
    <citation type="journal article" date="2002" name="Nature">
        <title>Genome sequence of the human malaria parasite Plasmodium falciparum.</title>
        <authorList>
            <person name="Gardner M.J."/>
            <person name="Hall N."/>
            <person name="Fung E."/>
            <person name="White O."/>
            <person name="Berriman M."/>
            <person name="Hyman R.W."/>
            <person name="Carlton J.M."/>
            <person name="Pain A."/>
            <person name="Nelson K.E."/>
            <person name="Bowman S."/>
            <person name="Paulsen I.T."/>
            <person name="James K.D."/>
            <person name="Eisen J.A."/>
            <person name="Rutherford K.M."/>
            <person name="Salzberg S.L."/>
            <person name="Craig A."/>
            <person name="Kyes S."/>
            <person name="Chan M.-S."/>
            <person name="Nene V."/>
            <person name="Shallom S.J."/>
            <person name="Suh B."/>
            <person name="Peterson J."/>
            <person name="Angiuoli S."/>
            <person name="Pertea M."/>
            <person name="Allen J."/>
            <person name="Selengut J."/>
            <person name="Haft D."/>
            <person name="Mather M.W."/>
            <person name="Vaidya A.B."/>
            <person name="Martin D.M.A."/>
            <person name="Fairlamb A.H."/>
            <person name="Fraunholz M.J."/>
            <person name="Roos D.S."/>
            <person name="Ralph S.A."/>
            <person name="McFadden G.I."/>
            <person name="Cummings L.M."/>
            <person name="Subramanian G.M."/>
            <person name="Mungall C."/>
            <person name="Venter J.C."/>
            <person name="Carucci D.J."/>
            <person name="Hoffman S.L."/>
            <person name="Newbold C."/>
            <person name="Davis R.W."/>
            <person name="Fraser C.M."/>
            <person name="Barrell B.G."/>
        </authorList>
    </citation>
    <scope>NUCLEOTIDE SEQUENCE [LARGE SCALE GENOMIC DNA]</scope>
    <source>
        <strain evidence="9">3D7</strain>
    </source>
</reference>
<reference evidence="6" key="2">
    <citation type="journal article" date="2021" name="Mol. Biochem. Parasitol.">
        <title>Identification and characterisation of a phospholipid scramblase in the malaria parasite Plasmodium falciparum.</title>
        <authorList>
            <person name="Haase S."/>
            <person name="Condron M."/>
            <person name="Miller D."/>
            <person name="Cherkaoui D."/>
            <person name="Jordan S."/>
            <person name="Gulbis J.M."/>
            <person name="Baum J."/>
        </authorList>
    </citation>
    <scope>FUNCTION</scope>
    <scope>CATALYTIC ACTIVITY</scope>
    <scope>COFACTOR</scope>
    <scope>SUBUNIT</scope>
    <scope>SUBCELLULAR LOCATION</scope>
    <scope>DEVELOPMENTAL STAGE</scope>
    <scope>DISRUPTION PHENOTYPE</scope>
</reference>
<reference evidence="6" key="3">
    <citation type="journal article" date="2021" name="Nat. Commun.">
        <title>Plasmodium sporozoite phospholipid scramblase interacts with mammalian carbamoyl-phosphate synthetase 1 to infect hepatocytes.</title>
        <authorList>
            <person name="Cha S.J."/>
            <person name="Kim M.S."/>
            <person name="Na C.H."/>
            <person name="Jacobs-Lorena M."/>
        </authorList>
    </citation>
    <scope>FUNCTION</scope>
    <scope>SUBCELLULAR LOCATION</scope>
    <scope>DEVELOPMENTAL STAGE</scope>
</reference>
<keyword id="KW-0106">Calcium</keyword>
<keyword id="KW-1003">Cell membrane</keyword>
<keyword id="KW-0445">Lipid transport</keyword>
<keyword id="KW-0460">Magnesium</keyword>
<keyword id="KW-0472">Membrane</keyword>
<keyword id="KW-0479">Metal-binding</keyword>
<keyword id="KW-1185">Reference proteome</keyword>
<keyword id="KW-0812">Transmembrane</keyword>
<keyword id="KW-1133">Transmembrane helix</keyword>
<keyword id="KW-0813">Transport</keyword>
<organism evidence="9">
    <name type="scientific">Plasmodium falciparum (isolate 3D7)</name>
    <dbReference type="NCBI Taxonomy" id="36329"/>
    <lineage>
        <taxon>Eukaryota</taxon>
        <taxon>Sar</taxon>
        <taxon>Alveolata</taxon>
        <taxon>Apicomplexa</taxon>
        <taxon>Aconoidasida</taxon>
        <taxon>Haemosporida</taxon>
        <taxon>Plasmodiidae</taxon>
        <taxon>Plasmodium</taxon>
        <taxon>Plasmodium (Laverania)</taxon>
    </lineage>
</organism>
<name>PLSH_PLAF7</name>
<sequence>MEEKNIHMQPNINYSYRNPNMYNMNYHNPIVPPPQQQMQLFVNDWKSILSPMQTCKIKQQFDDREFVADYFMGFKLDFNNKYLILDASTELMKFTACEKSEFCYRNCLPKICIPMNMKILSYGKEISKPDILMEKDCTCTFLCFNRPTIKMYDFSNNNNKELIGTIKTPYRCCSYNFNLFDPSNNKIMYMDDTCCQMSILCPCPWGPFKYSNFFLRDANSKEKIAHLRKEVPFLKFVKRDIDNYTLDFEQVQNPEWKMMLLAFALFLDYMYYDRK</sequence>
<dbReference type="EMBL" id="LN999944">
    <property type="protein sequence ID" value="CZT98482.1"/>
    <property type="molecule type" value="Genomic_DNA"/>
</dbReference>
<dbReference type="RefSeq" id="XP_001347504.1">
    <property type="nucleotide sequence ID" value="XM_001347468.1"/>
</dbReference>
<dbReference type="TCDB" id="9.A.36.1.7">
    <property type="family name" value="the ca(2+)-dependent phospholipid scramblase (scramblase) family"/>
</dbReference>
<dbReference type="SwissPalm" id="Q8IJH8"/>
<dbReference type="PaxDb" id="5833-PF10_0220"/>
<dbReference type="EnsemblProtists" id="CZT98482">
    <property type="protein sequence ID" value="CZT98482"/>
    <property type="gene ID" value="PF3D7_1022700"/>
</dbReference>
<dbReference type="GeneID" id="810377"/>
<dbReference type="KEGG" id="pfa:PF3D7_1022700"/>
<dbReference type="VEuPathDB" id="PlasmoDB:PF3D7_1022700"/>
<dbReference type="HOGENOM" id="CLU_052272_0_0_1"/>
<dbReference type="InParanoid" id="Q8IJH8"/>
<dbReference type="OMA" id="NPNMNYP"/>
<dbReference type="OrthoDB" id="444338at2759"/>
<dbReference type="PhylomeDB" id="Q8IJH8"/>
<dbReference type="Proteomes" id="UP000001450">
    <property type="component" value="Chromosome 10"/>
</dbReference>
<dbReference type="GO" id="GO:0005886">
    <property type="term" value="C:plasma membrane"/>
    <property type="evidence" value="ECO:0000314"/>
    <property type="project" value="UniProtKB"/>
</dbReference>
<dbReference type="GO" id="GO:0005509">
    <property type="term" value="F:calcium ion binding"/>
    <property type="evidence" value="ECO:0000314"/>
    <property type="project" value="UniProtKB"/>
</dbReference>
<dbReference type="GO" id="GO:0000287">
    <property type="term" value="F:magnesium ion binding"/>
    <property type="evidence" value="ECO:0000314"/>
    <property type="project" value="UniProtKB"/>
</dbReference>
<dbReference type="GO" id="GO:0017128">
    <property type="term" value="F:phospholipid scramblase activity"/>
    <property type="evidence" value="ECO:0000314"/>
    <property type="project" value="UniProtKB"/>
</dbReference>
<dbReference type="GO" id="GO:0044650">
    <property type="term" value="P:adhesion of symbiont to host cell"/>
    <property type="evidence" value="ECO:0000314"/>
    <property type="project" value="UniProtKB"/>
</dbReference>
<dbReference type="GO" id="GO:0017121">
    <property type="term" value="P:plasma membrane phospholipid scrambling"/>
    <property type="evidence" value="ECO:0000255"/>
    <property type="project" value="GeneDB"/>
</dbReference>
<dbReference type="InterPro" id="IPR005552">
    <property type="entry name" value="Scramblase"/>
</dbReference>
<dbReference type="PANTHER" id="PTHR23248:SF9">
    <property type="entry name" value="PHOSPHOLIPID SCRAMBLASE"/>
    <property type="match status" value="1"/>
</dbReference>
<dbReference type="PANTHER" id="PTHR23248">
    <property type="entry name" value="PHOSPHOLIPID SCRAMBLASE-RELATED"/>
    <property type="match status" value="1"/>
</dbReference>
<dbReference type="Pfam" id="PF03803">
    <property type="entry name" value="Scramblase"/>
    <property type="match status" value="1"/>
</dbReference>